<keyword id="KW-0687">Ribonucleoprotein</keyword>
<keyword id="KW-0689">Ribosomal protein</keyword>
<protein>
    <recommendedName>
        <fullName evidence="1">Large ribosomal subunit protein bL28</fullName>
    </recommendedName>
    <alternativeName>
        <fullName evidence="2">50S ribosomal protein L28</fullName>
    </alternativeName>
</protein>
<name>RL28_CHLT2</name>
<comment type="similarity">
    <text evidence="1">Belongs to the bacterial ribosomal protein bL28 family.</text>
</comment>
<proteinExistence type="inferred from homology"/>
<feature type="chain" id="PRO_1000121604" description="Large ribosomal subunit protein bL28">
    <location>
        <begin position="1"/>
        <end position="89"/>
    </location>
</feature>
<gene>
    <name evidence="1" type="primary">rpmB</name>
    <name type="ordered locus">CTL0341</name>
</gene>
<evidence type="ECO:0000255" key="1">
    <source>
        <dbReference type="HAMAP-Rule" id="MF_00373"/>
    </source>
</evidence>
<evidence type="ECO:0000305" key="2"/>
<sequence>MSKKCALTGRKPRRGYSYAIRGISKKKKGIGLKVTGRTKRRFFPNMMTKRLWSTEENRFLKLKISAAALRLVDKLGLDQVVARAKSKGF</sequence>
<dbReference type="EMBL" id="AM884176">
    <property type="protein sequence ID" value="CAP03781.1"/>
    <property type="molecule type" value="Genomic_DNA"/>
</dbReference>
<dbReference type="RefSeq" id="WP_009871434.1">
    <property type="nucleotide sequence ID" value="NC_010287.1"/>
</dbReference>
<dbReference type="RefSeq" id="YP_001654425.1">
    <property type="nucleotide sequence ID" value="NC_010287.1"/>
</dbReference>
<dbReference type="SMR" id="B0B9J4"/>
<dbReference type="KEGG" id="ctb:CTL0341"/>
<dbReference type="PATRIC" id="fig|471472.4.peg.368"/>
<dbReference type="HOGENOM" id="CLU_064548_3_2_0"/>
<dbReference type="Proteomes" id="UP001154402">
    <property type="component" value="Chromosome"/>
</dbReference>
<dbReference type="GO" id="GO:1990904">
    <property type="term" value="C:ribonucleoprotein complex"/>
    <property type="evidence" value="ECO:0007669"/>
    <property type="project" value="UniProtKB-KW"/>
</dbReference>
<dbReference type="GO" id="GO:0005840">
    <property type="term" value="C:ribosome"/>
    <property type="evidence" value="ECO:0007669"/>
    <property type="project" value="UniProtKB-KW"/>
</dbReference>
<dbReference type="GO" id="GO:0003735">
    <property type="term" value="F:structural constituent of ribosome"/>
    <property type="evidence" value="ECO:0007669"/>
    <property type="project" value="InterPro"/>
</dbReference>
<dbReference type="GO" id="GO:0006412">
    <property type="term" value="P:translation"/>
    <property type="evidence" value="ECO:0007669"/>
    <property type="project" value="UniProtKB-UniRule"/>
</dbReference>
<dbReference type="FunFam" id="2.30.170.40:FF:000010">
    <property type="entry name" value="50S ribosomal protein L28"/>
    <property type="match status" value="1"/>
</dbReference>
<dbReference type="Gene3D" id="2.30.170.40">
    <property type="entry name" value="Ribosomal protein L28/L24"/>
    <property type="match status" value="1"/>
</dbReference>
<dbReference type="HAMAP" id="MF_00373">
    <property type="entry name" value="Ribosomal_bL28"/>
    <property type="match status" value="1"/>
</dbReference>
<dbReference type="InterPro" id="IPR026569">
    <property type="entry name" value="Ribosomal_bL28"/>
</dbReference>
<dbReference type="InterPro" id="IPR034704">
    <property type="entry name" value="Ribosomal_bL28/bL31-like_sf"/>
</dbReference>
<dbReference type="InterPro" id="IPR001383">
    <property type="entry name" value="Ribosomal_bL28_bact-type"/>
</dbReference>
<dbReference type="InterPro" id="IPR037147">
    <property type="entry name" value="Ribosomal_bL28_sf"/>
</dbReference>
<dbReference type="NCBIfam" id="TIGR00009">
    <property type="entry name" value="L28"/>
    <property type="match status" value="1"/>
</dbReference>
<dbReference type="PANTHER" id="PTHR13528">
    <property type="entry name" value="39S RIBOSOMAL PROTEIN L28, MITOCHONDRIAL"/>
    <property type="match status" value="1"/>
</dbReference>
<dbReference type="PANTHER" id="PTHR13528:SF2">
    <property type="entry name" value="LARGE RIBOSOMAL SUBUNIT PROTEIN BL28M"/>
    <property type="match status" value="1"/>
</dbReference>
<dbReference type="Pfam" id="PF00830">
    <property type="entry name" value="Ribosomal_L28"/>
    <property type="match status" value="1"/>
</dbReference>
<dbReference type="SUPFAM" id="SSF143800">
    <property type="entry name" value="L28p-like"/>
    <property type="match status" value="1"/>
</dbReference>
<accession>B0B9J4</accession>
<reference key="1">
    <citation type="journal article" date="2008" name="Genome Res.">
        <title>Chlamydia trachomatis: genome sequence analysis of lymphogranuloma venereum isolates.</title>
        <authorList>
            <person name="Thomson N.R."/>
            <person name="Holden M.T.G."/>
            <person name="Carder C."/>
            <person name="Lennard N."/>
            <person name="Lockey S.J."/>
            <person name="Marsh P."/>
            <person name="Skipp P."/>
            <person name="O'Connor C.D."/>
            <person name="Goodhead I."/>
            <person name="Norbertzcak H."/>
            <person name="Harris B."/>
            <person name="Ormond D."/>
            <person name="Rance R."/>
            <person name="Quail M.A."/>
            <person name="Parkhill J."/>
            <person name="Stephens R.S."/>
            <person name="Clarke I.N."/>
        </authorList>
    </citation>
    <scope>NUCLEOTIDE SEQUENCE [LARGE SCALE GENOMIC DNA]</scope>
    <source>
        <strain>ATCC VR-902B / DSM 19102 / 434/Bu</strain>
    </source>
</reference>
<organism>
    <name type="scientific">Chlamydia trachomatis serovar L2 (strain ATCC VR-902B / DSM 19102 / 434/Bu)</name>
    <dbReference type="NCBI Taxonomy" id="471472"/>
    <lineage>
        <taxon>Bacteria</taxon>
        <taxon>Pseudomonadati</taxon>
        <taxon>Chlamydiota</taxon>
        <taxon>Chlamydiia</taxon>
        <taxon>Chlamydiales</taxon>
        <taxon>Chlamydiaceae</taxon>
        <taxon>Chlamydia/Chlamydophila group</taxon>
        <taxon>Chlamydia</taxon>
    </lineage>
</organism>